<organism>
    <name type="scientific">Escherichia coli (strain K12)</name>
    <dbReference type="NCBI Taxonomy" id="83333"/>
    <lineage>
        <taxon>Bacteria</taxon>
        <taxon>Pseudomonadati</taxon>
        <taxon>Pseudomonadota</taxon>
        <taxon>Gammaproteobacteria</taxon>
        <taxon>Enterobacterales</taxon>
        <taxon>Enterobacteriaceae</taxon>
        <taxon>Escherichia</taxon>
    </lineage>
</organism>
<reference key="1">
    <citation type="journal article" date="1988" name="FEMS Microbiol. Lett.">
        <title>Nucleotide sequence of manX(ptsL) encoding the enzyme III(Man) (II-A(Man)) function in the phosphotransferase system of Escherichia coli K-12.</title>
        <authorList>
            <person name="Saris P.E.J."/>
            <person name="Liljestroem P."/>
            <person name="Palva E.T."/>
        </authorList>
    </citation>
    <scope>NUCLEOTIDE SEQUENCE [GENOMIC DNA]</scope>
    <source>
        <strain>K12</strain>
    </source>
</reference>
<reference key="2">
    <citation type="journal article" date="1987" name="J. Biol. Chem.">
        <title>The mannose permease of Escherichia coli consists of three different proteins. Amino acid sequence and function in sugar transport, sugar phosphorylation, and penetration of phage lambda DNA.</title>
        <authorList>
            <person name="Erni B."/>
            <person name="Zanolari B."/>
            <person name="Kocher H.P."/>
        </authorList>
    </citation>
    <scope>NUCLEOTIDE SEQUENCE [GENOMIC DNA]</scope>
    <scope>FUNCTION</scope>
    <scope>SUBCELLULAR LOCATION</scope>
    <scope>SUBUNIT</scope>
</reference>
<reference key="3">
    <citation type="journal article" date="1996" name="DNA Res.">
        <title>A 460-kb DNA sequence of the Escherichia coli K-12 genome corresponding to the 40.1-50.0 min region on the linkage map.</title>
        <authorList>
            <person name="Itoh T."/>
            <person name="Aiba H."/>
            <person name="Baba T."/>
            <person name="Fujita K."/>
            <person name="Hayashi K."/>
            <person name="Inada T."/>
            <person name="Isono K."/>
            <person name="Kasai H."/>
            <person name="Kimura S."/>
            <person name="Kitakawa M."/>
            <person name="Kitagawa M."/>
            <person name="Makino K."/>
            <person name="Miki T."/>
            <person name="Mizobuchi K."/>
            <person name="Mori H."/>
            <person name="Mori T."/>
            <person name="Motomura K."/>
            <person name="Nakade S."/>
            <person name="Nakamura Y."/>
            <person name="Nashimoto H."/>
            <person name="Nishio Y."/>
            <person name="Oshima T."/>
            <person name="Saito N."/>
            <person name="Sampei G."/>
            <person name="Seki Y."/>
            <person name="Sivasundaram S."/>
            <person name="Tagami H."/>
            <person name="Takeda J."/>
            <person name="Takemoto K."/>
            <person name="Wada C."/>
            <person name="Yamamoto Y."/>
            <person name="Horiuchi T."/>
        </authorList>
    </citation>
    <scope>NUCLEOTIDE SEQUENCE [LARGE SCALE GENOMIC DNA]</scope>
    <source>
        <strain>K12 / W3110 / ATCC 27325 / DSM 5911</strain>
    </source>
</reference>
<reference key="4">
    <citation type="journal article" date="1997" name="Science">
        <title>The complete genome sequence of Escherichia coli K-12.</title>
        <authorList>
            <person name="Blattner F.R."/>
            <person name="Plunkett G. III"/>
            <person name="Bloch C.A."/>
            <person name="Perna N.T."/>
            <person name="Burland V."/>
            <person name="Riley M."/>
            <person name="Collado-Vides J."/>
            <person name="Glasner J.D."/>
            <person name="Rode C.K."/>
            <person name="Mayhew G.F."/>
            <person name="Gregor J."/>
            <person name="Davis N.W."/>
            <person name="Kirkpatrick H.A."/>
            <person name="Goeden M.A."/>
            <person name="Rose D.J."/>
            <person name="Mau B."/>
            <person name="Shao Y."/>
        </authorList>
    </citation>
    <scope>NUCLEOTIDE SEQUENCE [LARGE SCALE GENOMIC DNA]</scope>
    <source>
        <strain>K12 / MG1655 / ATCC 47076</strain>
    </source>
</reference>
<reference key="5">
    <citation type="journal article" date="2006" name="Mol. Syst. Biol.">
        <title>Highly accurate genome sequences of Escherichia coli K-12 strains MG1655 and W3110.</title>
        <authorList>
            <person name="Hayashi K."/>
            <person name="Morooka N."/>
            <person name="Yamamoto Y."/>
            <person name="Fujita K."/>
            <person name="Isono K."/>
            <person name="Choi S."/>
            <person name="Ohtsubo E."/>
            <person name="Baba T."/>
            <person name="Wanner B.L."/>
            <person name="Mori H."/>
            <person name="Horiuchi T."/>
        </authorList>
    </citation>
    <scope>NUCLEOTIDE SEQUENCE [LARGE SCALE GENOMIC DNA]</scope>
    <source>
        <strain>K12 / W3110 / ATCC 27325 / DSM 5911</strain>
    </source>
</reference>
<reference key="6">
    <citation type="journal article" date="1997" name="Electrophoresis">
        <title>Comparing the predicted and observed properties of proteins encoded in the genome of Escherichia coli K-12.</title>
        <authorList>
            <person name="Link A.J."/>
            <person name="Robison K."/>
            <person name="Church G.M."/>
        </authorList>
    </citation>
    <scope>PROTEIN SEQUENCE OF 2-13</scope>
    <source>
        <strain>K12 / EMG2</strain>
    </source>
</reference>
<reference key="7">
    <citation type="journal article" date="1974" name="Proc. Natl. Acad. Sci. U.S.A.">
        <title>Phosphotransferase-system enzymes as chemoreceptors for certain sugars in Escherichia coli chemotaxis.</title>
        <authorList>
            <person name="Adler J."/>
            <person name="Epstein W."/>
        </authorList>
    </citation>
    <scope>FUNCTION</scope>
</reference>
<reference key="8">
    <citation type="journal article" date="1978" name="Mol. Gen. Genet.">
        <title>E. coli K-12 pel mutants, which block phage lambda DNA injection, coincide with ptsM, which determines a component of a sugar transport system.</title>
        <authorList>
            <person name="Elliott J."/>
            <person name="Arber W."/>
        </authorList>
    </citation>
    <scope>FUNCTION</scope>
</reference>
<reference key="9">
    <citation type="journal article" date="1985" name="J. Biol. Chem.">
        <title>The mannose-permease of the bacterial phosphotransferase system. Gene cloning and purification of the enzyme IIMan/IIIMan complex of Escherichia coli.</title>
        <authorList>
            <person name="Erni B."/>
            <person name="Zanolari B."/>
        </authorList>
    </citation>
    <scope>FUNCTION</scope>
    <scope>SUBCELLULAR LOCATION</scope>
    <scope>SUBUNIT</scope>
</reference>
<reference key="10">
    <citation type="journal article" date="1989" name="J. Biol. Chem.">
        <title>Mannose permease of Escherichia coli. Domain structure and function of the phosphorylating subunit.</title>
        <authorList>
            <person name="Erni B."/>
            <person name="Zanolari B."/>
            <person name="Graff P."/>
            <person name="Kocher H.P."/>
        </authorList>
    </citation>
    <scope>FUNCTION</scope>
    <scope>CATALYTIC ACTIVITY</scope>
    <scope>SUBUNIT</scope>
    <scope>PHOSPHORYLATION AT HIS-10 AND HIS-175</scope>
</reference>
<reference key="11">
    <citation type="journal article" date="1993" name="J. Biol. Chem.">
        <title>The mannose transporter of Escherichia coli. Structure and function of the IIABMan subunit.</title>
        <authorList>
            <person name="Stolz B."/>
            <person name="Huber M."/>
            <person name="Markovic-Housley Z."/>
            <person name="Erni B."/>
        </authorList>
    </citation>
    <scope>FUNCTION</scope>
    <scope>CATALYTIC ACTIVITY</scope>
    <scope>MUTAGENESIS OF HIS-10; TRP-12; LYS-48; SER-72; HIS-86; SER-110; HIS-175 AND HIS-219</scope>
    <scope>ACTIVE SITE</scope>
    <scope>PHOSPHORYLATION AT HIS-10 AND HIS-175</scope>
    <scope>SUBUNIT</scope>
</reference>
<reference key="12">
    <citation type="journal article" date="1998" name="Mol. Microbiol.">
        <title>Control of the expression of the manXYZ operon in Escherichia coli: Mlc is a negative regulator of the mannose PTS.</title>
        <authorList>
            <person name="Plumbridge J."/>
        </authorList>
    </citation>
    <scope>INDUCTION</scope>
</reference>
<reference key="13">
    <citation type="journal article" date="2001" name="J. Mol. Microbiol. Biotechnol.">
        <title>Regulation of PTS gene expression by the homologous transcriptional regulators, Mlc and NagC, in Escherichia coli (or how two similar repressors can behave differently).</title>
        <authorList>
            <person name="Plumbridge J."/>
        </authorList>
    </citation>
    <scope>INDUCTION</scope>
</reference>
<reference key="14">
    <citation type="journal article" date="2005" name="J. Biol. Chem.">
        <title>Protein complexes of the Escherichia coli cell envelope.</title>
        <authorList>
            <person name="Stenberg F."/>
            <person name="Chovanec P."/>
            <person name="Maslen S.L."/>
            <person name="Robinson C.V."/>
            <person name="Ilag L."/>
            <person name="von Heijne G."/>
            <person name="Daley D.O."/>
        </authorList>
    </citation>
    <scope>SUBCELLULAR LOCATION</scope>
    <source>
        <strain>BL21-DE3</strain>
    </source>
</reference>
<reference key="15">
    <citation type="journal article" date="2009" name="Mol. Cell. Proteomics">
        <title>Lysine acetylation is a highly abundant and evolutionarily conserved modification in Escherichia coli.</title>
        <authorList>
            <person name="Zhang J."/>
            <person name="Sprung R."/>
            <person name="Pei J."/>
            <person name="Tan X."/>
            <person name="Kim S."/>
            <person name="Zhu H."/>
            <person name="Liu C.F."/>
            <person name="Grishin N.V."/>
            <person name="Zhao Y."/>
        </authorList>
    </citation>
    <scope>ACETYLATION [LARGE SCALE ANALYSIS] AT LYS-55 AND LYS-234</scope>
    <scope>IDENTIFICATION BY MASS SPECTROMETRY</scope>
    <source>
        <strain>K12 / JW1106</strain>
        <strain>K12 / MG1655 / ATCC 47076</strain>
    </source>
</reference>
<reference key="16">
    <citation type="journal article" date="2020" name="Biochim. Biophys. Acta">
        <title>The mannose phosphotransferase system (Man-PTS) - Mannose transporter and receptor for bacteriocins and bacteriophages.</title>
        <authorList>
            <person name="Jeckelmann J.M."/>
            <person name="Erni B."/>
        </authorList>
    </citation>
    <scope>REVIEW</scope>
</reference>
<reference evidence="26" key="17">
    <citation type="journal article" date="1996" name="J. Mol. Biol.">
        <title>Structure of the IIA domain of the mannose transporter from Escherichia coli at 1.7-A resolution.</title>
        <authorList>
            <person name="Nunn R.S."/>
            <person name="Markovic-Housley Z."/>
            <person name="Genovesio-Taverne J.-C."/>
            <person name="Fluekiger K."/>
            <person name="Rizkallah P.J."/>
            <person name="Jansonius J.N."/>
            <person name="Schirmer T."/>
            <person name="Erni B."/>
        </authorList>
    </citation>
    <scope>X-RAY CRYSTALLOGRAPHY (1.7 ANGSTROMS) OF 1-134</scope>
    <scope>DOMAIN</scope>
    <scope>ACTIVE SITE</scope>
</reference>
<reference key="18">
    <citation type="journal article" date="1994" name="FEBS Lett.">
        <title>Predicted topology of the N-terminal domain of the hydrophilic subunit of the mannose transporter of Escherichia coli.</title>
        <authorList>
            <person name="Markovic-Housley Z."/>
            <person name="Balbach J."/>
            <person name="Stolz B."/>
            <person name="Genovesio-Taverne J.-C."/>
        </authorList>
    </citation>
    <scope>STRUCTURE BY NMR OF 1-121</scope>
</reference>
<reference key="19">
    <citation type="journal article" date="1997" name="FEBS Lett.">
        <title>Secondary structure of the IIB domain of the Escherichia coli mannose transporter, a new fold in the class of alpha/beta twisted open-sheet structures.</title>
        <authorList>
            <person name="Gschwind R.M."/>
            <person name="Gemmecker G."/>
            <person name="Leutner M."/>
            <person name="Kessler H."/>
            <person name="Gutknecht R."/>
            <person name="Lanz R."/>
            <person name="Fluekiger K."/>
            <person name="Erni B."/>
        </authorList>
    </citation>
    <scope>STRUCTURE BY NMR OF 156-323</scope>
</reference>
<reference evidence="27" key="20">
    <citation type="journal article" date="2005" name="J. Biol. Chem.">
        <title>Solution NMR structure of the 48-kDa IIAMannose-HPr complex of the Escherichia coli mannose phosphotransferase system.</title>
        <authorList>
            <person name="Williams D.C. Jr."/>
            <person name="Cai M."/>
            <person name="Suh J.Y."/>
            <person name="Peterkofsky A."/>
            <person name="Clore G.M."/>
        </authorList>
    </citation>
    <scope>STRUCTURE BY NMR OF 1-133</scope>
    <scope>SUBUNIT</scope>
    <scope>ACTIVE SITE</scope>
</reference>
<reference evidence="28 29 30 31" key="21">
    <citation type="journal article" date="2008" name="J. Biol. Chem.">
        <title>Solution NMR structures of productive and non-productive complexes between the A and B domains of the cytoplasmic subunit of the mannose transporter of the Escherichia coli phosphotransferase system.</title>
        <authorList>
            <person name="Hu J."/>
            <person name="Hu K."/>
            <person name="Williams D.C. Jr."/>
            <person name="Komlosh M.E."/>
            <person name="Cai M."/>
            <person name="Clore G.M."/>
        </authorList>
    </citation>
    <scope>STRUCTURE BY NMR OF 2-134 AND 159-323</scope>
    <scope>MUTAGENESIS OF HIS-10</scope>
    <scope>DOMAIN</scope>
    <scope>ACTIVE SITE</scope>
</reference>
<dbReference type="EC" id="2.7.1.191" evidence="8 13"/>
<dbReference type="EMBL" id="M36404">
    <property type="protein sequence ID" value="AAA24110.1"/>
    <property type="molecule type" value="Genomic_DNA"/>
</dbReference>
<dbReference type="EMBL" id="J02699">
    <property type="protein sequence ID" value="AAA24443.1"/>
    <property type="molecule type" value="Genomic_DNA"/>
</dbReference>
<dbReference type="EMBL" id="U00096">
    <property type="protein sequence ID" value="AAC74887.1"/>
    <property type="molecule type" value="Genomic_DNA"/>
</dbReference>
<dbReference type="EMBL" id="AP009048">
    <property type="protein sequence ID" value="BAA15624.1"/>
    <property type="molecule type" value="Genomic_DNA"/>
</dbReference>
<dbReference type="PIR" id="A30286">
    <property type="entry name" value="WQECM3"/>
</dbReference>
<dbReference type="RefSeq" id="NP_416331.1">
    <property type="nucleotide sequence ID" value="NC_000913.3"/>
</dbReference>
<dbReference type="RefSeq" id="WP_000150543.1">
    <property type="nucleotide sequence ID" value="NZ_STEB01000009.1"/>
</dbReference>
<dbReference type="PDB" id="1PDO">
    <property type="method" value="X-ray"/>
    <property type="resolution" value="1.70 A"/>
    <property type="chains" value="A=2-133"/>
</dbReference>
<dbReference type="PDB" id="1VRC">
    <property type="method" value="NMR"/>
    <property type="chains" value="A/B=1-133"/>
</dbReference>
<dbReference type="PDB" id="1VSQ">
    <property type="method" value="NMR"/>
    <property type="chains" value="A/B=2-134, C=159-323"/>
</dbReference>
<dbReference type="PDB" id="2JZH">
    <property type="method" value="NMR"/>
    <property type="chains" value="A=154-323"/>
</dbReference>
<dbReference type="PDB" id="2JZN">
    <property type="method" value="NMR"/>
    <property type="chains" value="A/B=2-134, C=159-323"/>
</dbReference>
<dbReference type="PDB" id="2JZO">
    <property type="method" value="NMR"/>
    <property type="chains" value="A/B=2-134, D=159-323"/>
</dbReference>
<dbReference type="PDBsum" id="1PDO"/>
<dbReference type="PDBsum" id="1VRC"/>
<dbReference type="PDBsum" id="1VSQ"/>
<dbReference type="PDBsum" id="2JZH"/>
<dbReference type="PDBsum" id="2JZN"/>
<dbReference type="PDBsum" id="2JZO"/>
<dbReference type="SMR" id="P69797"/>
<dbReference type="BioGRID" id="4259144">
    <property type="interactions" value="315"/>
</dbReference>
<dbReference type="BioGRID" id="850691">
    <property type="interactions" value="2"/>
</dbReference>
<dbReference type="ComplexPortal" id="CPX-5968">
    <property type="entry name" value="D-mannose-specific enzyme II complex"/>
</dbReference>
<dbReference type="DIP" id="DIP-35846N"/>
<dbReference type="FunCoup" id="P69797">
    <property type="interactions" value="194"/>
</dbReference>
<dbReference type="IntAct" id="P69797">
    <property type="interactions" value="15"/>
</dbReference>
<dbReference type="MINT" id="P69797"/>
<dbReference type="STRING" id="511145.b1817"/>
<dbReference type="TCDB" id="4.A.6.1.1">
    <property type="family name" value="the pts mannose-fructose-sorbose (man) family"/>
</dbReference>
<dbReference type="iPTMnet" id="P69797"/>
<dbReference type="jPOST" id="P69797"/>
<dbReference type="PaxDb" id="511145-b1817"/>
<dbReference type="EnsemblBacteria" id="AAC74887">
    <property type="protein sequence ID" value="AAC74887"/>
    <property type="gene ID" value="b1817"/>
</dbReference>
<dbReference type="GeneID" id="93776066"/>
<dbReference type="GeneID" id="946334"/>
<dbReference type="KEGG" id="ecj:JW1806"/>
<dbReference type="KEGG" id="eco:b1817"/>
<dbReference type="KEGG" id="ecoc:C3026_10350"/>
<dbReference type="PATRIC" id="fig|1411691.4.peg.434"/>
<dbReference type="EchoBASE" id="EB0562"/>
<dbReference type="eggNOG" id="COG2893">
    <property type="taxonomic scope" value="Bacteria"/>
</dbReference>
<dbReference type="eggNOG" id="COG3444">
    <property type="taxonomic scope" value="Bacteria"/>
</dbReference>
<dbReference type="HOGENOM" id="CLU_074797_0_0_6"/>
<dbReference type="InParanoid" id="P69797"/>
<dbReference type="OMA" id="EMIFGKQ"/>
<dbReference type="OrthoDB" id="7065728at2"/>
<dbReference type="PhylomeDB" id="P69797"/>
<dbReference type="BioCyc" id="EcoCyc:MANX-MONOMER"/>
<dbReference type="BioCyc" id="MetaCyc:MANX-MONOMER"/>
<dbReference type="EvolutionaryTrace" id="P69797"/>
<dbReference type="PRO" id="PR:P69797"/>
<dbReference type="Proteomes" id="UP000000625">
    <property type="component" value="Chromosome"/>
</dbReference>
<dbReference type="GO" id="GO:0005737">
    <property type="term" value="C:cytoplasm"/>
    <property type="evidence" value="ECO:0000314"/>
    <property type="project" value="EcoCyc"/>
</dbReference>
<dbReference type="GO" id="GO:0005829">
    <property type="term" value="C:cytosol"/>
    <property type="evidence" value="ECO:0000314"/>
    <property type="project" value="EcoCyc"/>
</dbReference>
<dbReference type="GO" id="GO:0016020">
    <property type="term" value="C:membrane"/>
    <property type="evidence" value="ECO:0007005"/>
    <property type="project" value="UniProtKB"/>
</dbReference>
<dbReference type="GO" id="GO:0005886">
    <property type="term" value="C:plasma membrane"/>
    <property type="evidence" value="ECO:0000314"/>
    <property type="project" value="EcoCyc"/>
</dbReference>
<dbReference type="GO" id="GO:1902495">
    <property type="term" value="C:transmembrane transporter complex"/>
    <property type="evidence" value="ECO:0000353"/>
    <property type="project" value="ComplexPortal"/>
</dbReference>
<dbReference type="GO" id="GO:0016301">
    <property type="term" value="F:kinase activity"/>
    <property type="evidence" value="ECO:0000314"/>
    <property type="project" value="EcoCyc"/>
</dbReference>
<dbReference type="GO" id="GO:0042803">
    <property type="term" value="F:protein homodimerization activity"/>
    <property type="evidence" value="ECO:0000314"/>
    <property type="project" value="EcoCyc"/>
</dbReference>
<dbReference type="GO" id="GO:0022870">
    <property type="term" value="F:protein-N(PI)-phosphohistidine-mannose phosphotransferase system transporter activity"/>
    <property type="evidence" value="ECO:0000314"/>
    <property type="project" value="EcoCyc"/>
</dbReference>
<dbReference type="GO" id="GO:0008982">
    <property type="term" value="F:protein-N(PI)-phosphohistidine-sugar phosphotransferase activity"/>
    <property type="evidence" value="ECO:0000318"/>
    <property type="project" value="GO_Central"/>
</dbReference>
<dbReference type="GO" id="GO:0098708">
    <property type="term" value="P:D-glucose import across plasma membrane"/>
    <property type="evidence" value="ECO:0000314"/>
    <property type="project" value="EcoCyc"/>
</dbReference>
<dbReference type="GO" id="GO:1990539">
    <property type="term" value="P:fructose import across plasma membrane"/>
    <property type="evidence" value="ECO:0000269"/>
    <property type="project" value="EcoCyc"/>
</dbReference>
<dbReference type="GO" id="GO:0015761">
    <property type="term" value="P:mannose transmembrane transport"/>
    <property type="evidence" value="ECO:0000314"/>
    <property type="project" value="EcoCyc"/>
</dbReference>
<dbReference type="GO" id="GO:0015764">
    <property type="term" value="P:N-acetylglucosamine transport"/>
    <property type="evidence" value="ECO:0000269"/>
    <property type="project" value="EcoCyc"/>
</dbReference>
<dbReference type="GO" id="GO:0009401">
    <property type="term" value="P:phosphoenolpyruvate-dependent sugar phosphotransferase system"/>
    <property type="evidence" value="ECO:0000314"/>
    <property type="project" value="ComplexPortal"/>
</dbReference>
<dbReference type="CDD" id="cd00006">
    <property type="entry name" value="PTS_IIA_man"/>
    <property type="match status" value="1"/>
</dbReference>
<dbReference type="CDD" id="cd00001">
    <property type="entry name" value="PTS_IIB_man"/>
    <property type="match status" value="1"/>
</dbReference>
<dbReference type="FunFam" id="3.40.35.10:FF:000001">
    <property type="entry name" value="PTS system mannose-specific EIIAB component"/>
    <property type="match status" value="1"/>
</dbReference>
<dbReference type="FunFam" id="3.40.50.510:FF:000001">
    <property type="entry name" value="PTS system mannose-specific transporter subunit IIAB"/>
    <property type="match status" value="1"/>
</dbReference>
<dbReference type="Gene3D" id="3.40.50.510">
    <property type="entry name" value="Phosphotransferase system, mannose-type IIA component"/>
    <property type="match status" value="1"/>
</dbReference>
<dbReference type="Gene3D" id="3.40.35.10">
    <property type="entry name" value="Phosphotransferase system, sorbose subfamily IIB component"/>
    <property type="match status" value="1"/>
</dbReference>
<dbReference type="InterPro" id="IPR051471">
    <property type="entry name" value="Bacterial_PTS_sugar_comp"/>
</dbReference>
<dbReference type="InterPro" id="IPR013789">
    <property type="entry name" value="PTS_EIIA_man"/>
</dbReference>
<dbReference type="InterPro" id="IPR004701">
    <property type="entry name" value="PTS_EIIA_man-typ"/>
</dbReference>
<dbReference type="InterPro" id="IPR036662">
    <property type="entry name" value="PTS_EIIA_man-typ_sf"/>
</dbReference>
<dbReference type="InterPro" id="IPR033887">
    <property type="entry name" value="PTS_IIA_man"/>
</dbReference>
<dbReference type="InterPro" id="IPR004720">
    <property type="entry name" value="PTS_IIB_sorbose-sp"/>
</dbReference>
<dbReference type="InterPro" id="IPR036667">
    <property type="entry name" value="PTS_IIB_sorbose-sp_sf"/>
</dbReference>
<dbReference type="InterPro" id="IPR018455">
    <property type="entry name" value="PTS_IIB_sorbose-sp_subgr"/>
</dbReference>
<dbReference type="NCBIfam" id="TIGR00824">
    <property type="entry name" value="EIIA-man"/>
    <property type="match status" value="1"/>
</dbReference>
<dbReference type="NCBIfam" id="NF011670">
    <property type="entry name" value="PRK15088.1"/>
    <property type="match status" value="1"/>
</dbReference>
<dbReference type="NCBIfam" id="TIGR00854">
    <property type="entry name" value="pts-sorbose"/>
    <property type="match status" value="1"/>
</dbReference>
<dbReference type="PANTHER" id="PTHR33799">
    <property type="entry name" value="PTS PERMEASE-RELATED-RELATED"/>
    <property type="match status" value="1"/>
</dbReference>
<dbReference type="PANTHER" id="PTHR33799:SF1">
    <property type="entry name" value="PTS SYSTEM MANNOSE-SPECIFIC EIIAB COMPONENT-RELATED"/>
    <property type="match status" value="1"/>
</dbReference>
<dbReference type="Pfam" id="PF03610">
    <property type="entry name" value="EIIA-man"/>
    <property type="match status" value="1"/>
</dbReference>
<dbReference type="Pfam" id="PF03830">
    <property type="entry name" value="PTSIIB_sorb"/>
    <property type="match status" value="1"/>
</dbReference>
<dbReference type="SUPFAM" id="SSF52728">
    <property type="entry name" value="PTS IIb component"/>
    <property type="match status" value="1"/>
</dbReference>
<dbReference type="SUPFAM" id="SSF53062">
    <property type="entry name" value="PTS system fructose IIA component-like"/>
    <property type="match status" value="1"/>
</dbReference>
<dbReference type="PROSITE" id="PS51096">
    <property type="entry name" value="PTS_EIIA_TYPE_4"/>
    <property type="match status" value="1"/>
</dbReference>
<dbReference type="PROSITE" id="PS51101">
    <property type="entry name" value="PTS_EIIB_TYPE_4"/>
    <property type="match status" value="1"/>
</dbReference>
<evidence type="ECO:0000255" key="1">
    <source>
        <dbReference type="PROSITE-ProRule" id="PRU00419"/>
    </source>
</evidence>
<evidence type="ECO:0000255" key="2">
    <source>
        <dbReference type="PROSITE-ProRule" id="PRU00424"/>
    </source>
</evidence>
<evidence type="ECO:0000269" key="3">
    <source>
    </source>
</evidence>
<evidence type="ECO:0000269" key="4">
    <source>
    </source>
</evidence>
<evidence type="ECO:0000269" key="5">
    <source>
    </source>
</evidence>
<evidence type="ECO:0000269" key="6">
    <source>
    </source>
</evidence>
<evidence type="ECO:0000269" key="7">
    <source>
    </source>
</evidence>
<evidence type="ECO:0000269" key="8">
    <source>
    </source>
</evidence>
<evidence type="ECO:0000269" key="9">
    <source>
    </source>
</evidence>
<evidence type="ECO:0000269" key="10">
    <source>
    </source>
</evidence>
<evidence type="ECO:0000269" key="11">
    <source>
    </source>
</evidence>
<evidence type="ECO:0000269" key="12">
    <source>
    </source>
</evidence>
<evidence type="ECO:0000269" key="13">
    <source>
    </source>
</evidence>
<evidence type="ECO:0000269" key="14">
    <source>
    </source>
</evidence>
<evidence type="ECO:0000269" key="15">
    <source>
    </source>
</evidence>
<evidence type="ECO:0000303" key="16">
    <source>
    </source>
</evidence>
<evidence type="ECO:0000303" key="17">
    <source>
    </source>
</evidence>
<evidence type="ECO:0000303" key="18">
    <source ref="1"/>
</evidence>
<evidence type="ECO:0000305" key="19"/>
<evidence type="ECO:0000305" key="20">
    <source>
    </source>
</evidence>
<evidence type="ECO:0000305" key="21">
    <source>
    </source>
</evidence>
<evidence type="ECO:0000305" key="22">
    <source>
    </source>
</evidence>
<evidence type="ECO:0000305" key="23">
    <source>
    </source>
</evidence>
<evidence type="ECO:0000305" key="24">
    <source>
    </source>
</evidence>
<evidence type="ECO:0000305" key="25">
    <source>
    </source>
</evidence>
<evidence type="ECO:0007744" key="26">
    <source>
        <dbReference type="PDB" id="1PDO"/>
    </source>
</evidence>
<evidence type="ECO:0007744" key="27">
    <source>
        <dbReference type="PDB" id="1VRC"/>
    </source>
</evidence>
<evidence type="ECO:0007744" key="28">
    <source>
        <dbReference type="PDB" id="1VSQ"/>
    </source>
</evidence>
<evidence type="ECO:0007744" key="29">
    <source>
        <dbReference type="PDB" id="2JZH"/>
    </source>
</evidence>
<evidence type="ECO:0007744" key="30">
    <source>
        <dbReference type="PDB" id="2JZN"/>
    </source>
</evidence>
<evidence type="ECO:0007744" key="31">
    <source>
        <dbReference type="PDB" id="2JZO"/>
    </source>
</evidence>
<evidence type="ECO:0007829" key="32">
    <source>
        <dbReference type="PDB" id="1PDO"/>
    </source>
</evidence>
<evidence type="ECO:0007829" key="33">
    <source>
        <dbReference type="PDB" id="1VRC"/>
    </source>
</evidence>
<evidence type="ECO:0007829" key="34">
    <source>
        <dbReference type="PDB" id="1VSQ"/>
    </source>
</evidence>
<keyword id="KW-0002">3D-structure</keyword>
<keyword id="KW-0007">Acetylation</keyword>
<keyword id="KW-0997">Cell inner membrane</keyword>
<keyword id="KW-1003">Cell membrane</keyword>
<keyword id="KW-0963">Cytoplasm</keyword>
<keyword id="KW-0903">Direct protein sequencing</keyword>
<keyword id="KW-0418">Kinase</keyword>
<keyword id="KW-0472">Membrane</keyword>
<keyword id="KW-0597">Phosphoprotein</keyword>
<keyword id="KW-0598">Phosphotransferase system</keyword>
<keyword id="KW-1185">Reference proteome</keyword>
<keyword id="KW-0762">Sugar transport</keyword>
<keyword id="KW-0808">Transferase</keyword>
<keyword id="KW-0813">Transport</keyword>
<protein>
    <recommendedName>
        <fullName evidence="17">PTS system mannose-specific EIIAB component</fullName>
        <ecNumber evidence="8 13">2.7.1.191</ecNumber>
    </recommendedName>
    <alternativeName>
        <fullName evidence="17">EIIAB-Man</fullName>
    </alternativeName>
    <alternativeName>
        <fullName evidence="16">EIII-Man</fullName>
    </alternativeName>
    <domain>
        <recommendedName>
            <fullName evidence="17">Mannose-specific phosphotransferase enzyme IIA component</fullName>
        </recommendedName>
        <alternativeName>
            <fullName evidence="17">PTS system mannose-specific EIIA component</fullName>
        </alternativeName>
    </domain>
    <domain>
        <recommendedName>
            <fullName evidence="17">Mannose-specific phosphotransferase enzyme IIB component</fullName>
        </recommendedName>
        <alternativeName>
            <fullName evidence="17">PTS system mannose-specific EIIB component</fullName>
        </alternativeName>
    </domain>
</protein>
<proteinExistence type="evidence at protein level"/>
<name>PTNAB_ECOLI</name>
<comment type="function">
    <text evidence="8 9 10 13">The phosphoenolpyruvate-dependent sugar phosphotransferase system (sugar PTS), a major carbohydrate active transport system, catalyzes the phosphorylation of incoming sugar substrates concomitantly with their translocation across the cell membrane. The enzyme II ManXYZ PTS system is involved in mannose transport.</text>
</comment>
<comment type="function">
    <text evidence="11 12">Also functions as a receptor for bacterial chemotaxis and is required for infection of the cell by bacteriophage lambda where it most likely functions as a pore for penetration of lambda DNA.</text>
</comment>
<comment type="catalytic activity">
    <reaction evidence="8 13">
        <text>D-mannose(out) + N(pros)-phospho-L-histidyl-[protein] = D-mannose 6-phosphate(in) + L-histidyl-[protein]</text>
        <dbReference type="Rhea" id="RHEA:49232"/>
        <dbReference type="Rhea" id="RHEA-COMP:9745"/>
        <dbReference type="Rhea" id="RHEA-COMP:9746"/>
        <dbReference type="ChEBI" id="CHEBI:4208"/>
        <dbReference type="ChEBI" id="CHEBI:29979"/>
        <dbReference type="ChEBI" id="CHEBI:58735"/>
        <dbReference type="ChEBI" id="CHEBI:64837"/>
        <dbReference type="EC" id="2.7.1.191"/>
    </reaction>
</comment>
<comment type="subunit">
    <text evidence="4 8 9 10 24">Homodimer.</text>
</comment>
<comment type="interaction">
    <interactant intactId="EBI-554089">
        <id>P69797</id>
    </interactant>
    <interactant intactId="EBI-1125696">
        <id>P0ACN7</id>
        <label>cytR</label>
    </interactant>
    <organismsDiffer>false</organismsDiffer>
    <experiments>2</experiments>
</comment>
<comment type="subcellular location">
    <subcellularLocation>
        <location evidence="5 9 10">Cytoplasm</location>
    </subcellularLocation>
    <subcellularLocation>
        <location evidence="5 10">Cell inner membrane</location>
        <topology evidence="5 10">Peripheral membrane protein</topology>
    </subcellularLocation>
</comment>
<comment type="induction">
    <text evidence="3 15">Expression of the manXYZ operon is positively regulated by the cAMP-CRP complex and negatively regulated by the Mlc transcriptional repressor (PubMed:11361067, PubMed:9484892). Expression is also weakly repressed by NagC (PubMed:11361067, PubMed:9484892).</text>
</comment>
<comment type="domain">
    <text evidence="1 21 25">The PTS EIIA type-4 domain is phosphorylated by phospho-HPr on a histidyl residue. Then, it transfers the phosphoryl group to the PTS EIIB type-4 domain.</text>
</comment>
<comment type="domain">
    <text evidence="2 21">The PTS EIIB type-4 domain is phosphorylated by phospho-EIIA on a histidyl residue. Then, it transfers the phosphoryl group to the sugar substrate concomitantly with the sugar uptake processed by the PTS EIIC type-4 domain.</text>
</comment>
<feature type="initiator methionine" description="Removed" evidence="14 23">
    <location>
        <position position="1"/>
    </location>
</feature>
<feature type="chain" id="PRO_0000186653" description="PTS system mannose-specific EIIAB component">
    <location>
        <begin position="2"/>
        <end position="323"/>
    </location>
</feature>
<feature type="domain" description="PTS EIIA type-4" evidence="1 21 25">
    <location>
        <begin position="2"/>
        <end position="124"/>
    </location>
</feature>
<feature type="domain" description="PTS EIIB type-4" evidence="2 21">
    <location>
        <begin position="157"/>
        <end position="320"/>
    </location>
</feature>
<feature type="region of interest" description="Hinge" evidence="22">
    <location>
        <begin position="137"/>
        <end position="155"/>
    </location>
</feature>
<feature type="active site" description="Tele-phosphohistidine intermediate; for EIIA activity" evidence="1 20 21 24 25">
    <location>
        <position position="10"/>
    </location>
</feature>
<feature type="active site" description="Pros-phosphohistidine intermediate; for EIIB activity" evidence="21 24">
    <location>
        <position position="175"/>
    </location>
</feature>
<feature type="site" description="Involved in the phosphoryl transfer between H-10 and H-175" evidence="24">
    <location>
        <position position="89"/>
    </location>
</feature>
<feature type="modified residue" description="Phosphohistidine; by HPr" evidence="22 24">
    <location>
        <position position="10"/>
    </location>
</feature>
<feature type="modified residue" description="N6-acetyllysine" evidence="7">
    <location>
        <position position="55"/>
    </location>
</feature>
<feature type="modified residue" description="Phosphohistidine; by EIIA" evidence="2 22 24">
    <location>
        <position position="175"/>
    </location>
</feature>
<feature type="modified residue" description="N6-acetyllysine" evidence="7">
    <location>
        <position position="234"/>
    </location>
</feature>
<feature type="mutagenesis site" description="Loss of phosphotransferase activity. Unable to dimerize." evidence="13">
    <original>H</original>
    <variation>C</variation>
    <location>
        <position position="10"/>
    </location>
</feature>
<feature type="mutagenesis site" description="Results in the formation of a single complex corresponding to the productive phosphoryl transfer complex." evidence="6">
    <original>H</original>
    <variation>E</variation>
    <location>
        <position position="10"/>
    </location>
</feature>
<feature type="mutagenesis site" description="Slight phosphotransferase activity. Unable to dimerize." evidence="13">
    <original>W</original>
    <variation>F</variation>
    <location>
        <position position="12"/>
    </location>
</feature>
<feature type="mutagenesis site" description="Retains more than 50% of phosphotransferase activity." evidence="13">
    <original>K</original>
    <variation>C</variation>
    <location>
        <position position="48"/>
    </location>
</feature>
<feature type="mutagenesis site" description="Slight phosphotransferase activity. Unable to dimerize." evidence="13">
    <original>S</original>
    <variation>C</variation>
    <location>
        <position position="72"/>
    </location>
</feature>
<feature type="mutagenesis site" description="Loss of phosphotransferase activity." evidence="13">
    <original>H</original>
    <variation>N</variation>
    <location>
        <position position="86"/>
    </location>
</feature>
<feature type="mutagenesis site" description="Retains more than 50% of phosphotransferase activity." evidence="13">
    <original>S</original>
    <variation>C</variation>
    <location>
        <position position="110"/>
    </location>
</feature>
<feature type="mutagenesis site" description="Loss of phosphotransferase activity." evidence="13">
    <original>H</original>
    <variation>C</variation>
    <location>
        <position position="175"/>
    </location>
</feature>
<feature type="mutagenesis site" description="Slight phosphotransferase activity." evidence="13">
    <original>H</original>
    <variation>Q</variation>
    <location>
        <position position="219"/>
    </location>
</feature>
<feature type="sequence conflict" description="In Ref. 1; AAA24110." evidence="19" ref="1">
    <original>TIAIVIGTHGWAAEQLLKTAEM</original>
    <variation>GWGCRAGCLKRQKW</variation>
    <location>
        <begin position="2"/>
        <end position="23"/>
    </location>
</feature>
<feature type="sequence conflict" description="In Ref. 1; AAA24110." evidence="19" ref="1">
    <original>D</original>
    <variation>N</variation>
    <location>
        <position position="35"/>
    </location>
</feature>
<feature type="sequence conflict" description="In Ref. 1; AAA24110." evidence="19" ref="1">
    <original>T</original>
    <variation>R</variation>
    <location>
        <position position="101"/>
    </location>
</feature>
<feature type="sequence conflict" description="In Ref. 1; AAA24110." evidence="19" ref="1">
    <original>A</original>
    <variation>G</variation>
    <location>
        <position position="142"/>
    </location>
</feature>
<feature type="strand" evidence="32">
    <location>
        <begin position="4"/>
        <end position="8"/>
    </location>
</feature>
<feature type="strand" evidence="33">
    <location>
        <begin position="10"/>
        <end position="12"/>
    </location>
</feature>
<feature type="helix" evidence="32">
    <location>
        <begin position="13"/>
        <end position="25"/>
    </location>
</feature>
<feature type="strand" evidence="32">
    <location>
        <begin position="29"/>
        <end position="34"/>
    </location>
</feature>
<feature type="helix" evidence="32">
    <location>
        <begin position="42"/>
        <end position="53"/>
    </location>
</feature>
<feature type="strand" evidence="32">
    <location>
        <begin position="62"/>
        <end position="68"/>
    </location>
</feature>
<feature type="helix" evidence="32">
    <location>
        <begin position="72"/>
        <end position="81"/>
    </location>
</feature>
<feature type="strand" evidence="32">
    <location>
        <begin position="87"/>
        <end position="92"/>
    </location>
</feature>
<feature type="helix" evidence="32">
    <location>
        <begin position="95"/>
        <end position="105"/>
    </location>
</feature>
<feature type="helix" evidence="32">
    <location>
        <begin position="111"/>
        <end position="124"/>
    </location>
</feature>
<feature type="strand" evidence="34">
    <location>
        <begin position="163"/>
        <end position="170"/>
    </location>
</feature>
<feature type="helix" evidence="34">
    <location>
        <begin position="178"/>
        <end position="185"/>
    </location>
</feature>
<feature type="strand" evidence="34">
    <location>
        <begin position="189"/>
        <end position="194"/>
    </location>
</feature>
<feature type="helix" evidence="34">
    <location>
        <begin position="196"/>
        <end position="199"/>
    </location>
</feature>
<feature type="helix" evidence="34">
    <location>
        <begin position="202"/>
        <end position="210"/>
    </location>
</feature>
<feature type="strand" evidence="34">
    <location>
        <begin position="217"/>
        <end position="221"/>
    </location>
</feature>
<feature type="helix" evidence="34">
    <location>
        <begin position="223"/>
        <end position="230"/>
    </location>
</feature>
<feature type="helix" evidence="34">
    <location>
        <begin position="233"/>
        <end position="235"/>
    </location>
</feature>
<feature type="strand" evidence="34">
    <location>
        <begin position="239"/>
        <end position="246"/>
    </location>
</feature>
<feature type="helix" evidence="34">
    <location>
        <begin position="247"/>
        <end position="255"/>
    </location>
</feature>
<feature type="strand" evidence="34">
    <location>
        <begin position="261"/>
        <end position="267"/>
    </location>
</feature>
<feature type="strand" evidence="34">
    <location>
        <begin position="274"/>
        <end position="276"/>
    </location>
</feature>
<feature type="strand" evidence="34">
    <location>
        <begin position="278"/>
        <end position="280"/>
    </location>
</feature>
<feature type="helix" evidence="34">
    <location>
        <begin position="285"/>
        <end position="296"/>
    </location>
</feature>
<feature type="strand" evidence="34">
    <location>
        <begin position="300"/>
        <end position="303"/>
    </location>
</feature>
<feature type="helix" evidence="34">
    <location>
        <begin position="314"/>
        <end position="319"/>
    </location>
</feature>
<sequence>MTIAIVIGTHGWAAEQLLKTAEMLLGEQENVGWIDFVPGENAETLIEKYNAQLAKLDTTKGVLFLVDTWGGSPFNAASRIVVDKEHYEVIAGVNIPMLVETLMARDDDPSFDELVALAVETGREGVKALKAKPVEKAAPAPAAAAPKAAPTPAKPMGPNDYMVIGLARIDDRLIHGQVATRWTKETNVSRIIVVSDEVAADTVRKTLLTQVAPPGVTAHVVDVAKMIRVYNNPKYAGERVMLLFTNPTDVERLVEGGVKITSVNVGGMAFRQGKTQVNNAVSVDEKDIEAFKKLNARGIELEVRKVSTDPKLKMMDLISKIDK</sequence>
<gene>
    <name evidence="18" type="primary">manX</name>
    <name type="synonym">gptB</name>
    <name evidence="16" type="synonym">ptsL</name>
    <name type="ordered locus">b1817</name>
    <name type="ordered locus">JW1806</name>
</gene>
<accession>P69797</accession>
<accession>P08186</accession>
<accession>Q47350</accession>